<organism>
    <name type="scientific">Bacillus cereus (strain 03BB102)</name>
    <dbReference type="NCBI Taxonomy" id="572264"/>
    <lineage>
        <taxon>Bacteria</taxon>
        <taxon>Bacillati</taxon>
        <taxon>Bacillota</taxon>
        <taxon>Bacilli</taxon>
        <taxon>Bacillales</taxon>
        <taxon>Bacillaceae</taxon>
        <taxon>Bacillus</taxon>
        <taxon>Bacillus cereus group</taxon>
    </lineage>
</organism>
<proteinExistence type="inferred from homology"/>
<name>PEPT_BACC3</name>
<reference key="1">
    <citation type="submission" date="2009-02" db="EMBL/GenBank/DDBJ databases">
        <title>Genome sequence of Bacillus cereus 03BB102.</title>
        <authorList>
            <person name="Dodson R.J."/>
            <person name="Jackson P."/>
            <person name="Munk A.C."/>
            <person name="Brettin T."/>
            <person name="Bruce D."/>
            <person name="Detter C."/>
            <person name="Tapia R."/>
            <person name="Han C."/>
            <person name="Sutton G."/>
            <person name="Sims D."/>
        </authorList>
    </citation>
    <scope>NUCLEOTIDE SEQUENCE [LARGE SCALE GENOMIC DNA]</scope>
    <source>
        <strain>03BB102</strain>
    </source>
</reference>
<sequence>MKEELIERFTRYVKIDTQSNEDSHTVPTTPGQIEFGKLLVEELKEVGLTEVTMDDNGYVMATLPANTDKDVPVIGFLAHLDTATDFTGKNVKPQIHENFDGNAITLNEELNVVLTPEQFPELPSYKGHTIITTDGTTLLGADDKAGLTEIMVAMNYLIHNPQIKHGKIRVAFTPDEEIGRGPAHFDVEAFGASFAYTMDGGPLGGLEYESFNAAGAKLTFNGTNTHPGTAKNKMRNATKLAMEFNGHLPVEEAPEYTEGYEGFYHLLSLNGDVEQSKAYYIIRDFDRKNFEARKNTIENIVKQMQEKYGQDAVVLEMNDQYYNMLEKIEPVREIVDIAYEAMKSLNIEPNIHPIRGGTDGSQLSYMGLPTPNIFTGGENYHGKFEYVSVDVMEKAVQVIIEIARRFEEQA</sequence>
<protein>
    <recommendedName>
        <fullName evidence="1">Peptidase T</fullName>
        <ecNumber evidence="1">3.4.11.4</ecNumber>
    </recommendedName>
    <alternativeName>
        <fullName evidence="1">Aminotripeptidase</fullName>
        <shortName evidence="1">Tripeptidase</shortName>
    </alternativeName>
    <alternativeName>
        <fullName evidence="1">Tripeptide aminopeptidase</fullName>
    </alternativeName>
</protein>
<keyword id="KW-0031">Aminopeptidase</keyword>
<keyword id="KW-0963">Cytoplasm</keyword>
<keyword id="KW-0378">Hydrolase</keyword>
<keyword id="KW-0479">Metal-binding</keyword>
<keyword id="KW-0482">Metalloprotease</keyword>
<keyword id="KW-0645">Protease</keyword>
<keyword id="KW-0862">Zinc</keyword>
<evidence type="ECO:0000255" key="1">
    <source>
        <dbReference type="HAMAP-Rule" id="MF_00550"/>
    </source>
</evidence>
<gene>
    <name evidence="1" type="primary">pepT</name>
    <name type="ordered locus">BCA_3837</name>
</gene>
<comment type="function">
    <text evidence="1">Cleaves the N-terminal amino acid of tripeptides.</text>
</comment>
<comment type="catalytic activity">
    <reaction evidence="1">
        <text>Release of the N-terminal residue from a tripeptide.</text>
        <dbReference type="EC" id="3.4.11.4"/>
    </reaction>
</comment>
<comment type="cofactor">
    <cofactor evidence="1">
        <name>Zn(2+)</name>
        <dbReference type="ChEBI" id="CHEBI:29105"/>
    </cofactor>
    <text evidence="1">Binds 2 Zn(2+) ions per subunit.</text>
</comment>
<comment type="subcellular location">
    <subcellularLocation>
        <location evidence="1">Cytoplasm</location>
    </subcellularLocation>
</comment>
<comment type="similarity">
    <text evidence="1">Belongs to the peptidase M20B family.</text>
</comment>
<feature type="chain" id="PRO_1000200883" description="Peptidase T">
    <location>
        <begin position="1"/>
        <end position="410"/>
    </location>
</feature>
<feature type="active site" evidence="1">
    <location>
        <position position="81"/>
    </location>
</feature>
<feature type="active site" description="Proton acceptor" evidence="1">
    <location>
        <position position="176"/>
    </location>
</feature>
<feature type="binding site" evidence="1">
    <location>
        <position position="79"/>
    </location>
    <ligand>
        <name>Zn(2+)</name>
        <dbReference type="ChEBI" id="CHEBI:29105"/>
        <label>1</label>
    </ligand>
</feature>
<feature type="binding site" evidence="1">
    <location>
        <position position="142"/>
    </location>
    <ligand>
        <name>Zn(2+)</name>
        <dbReference type="ChEBI" id="CHEBI:29105"/>
        <label>1</label>
    </ligand>
</feature>
<feature type="binding site" evidence="1">
    <location>
        <position position="142"/>
    </location>
    <ligand>
        <name>Zn(2+)</name>
        <dbReference type="ChEBI" id="CHEBI:29105"/>
        <label>2</label>
    </ligand>
</feature>
<feature type="binding site" evidence="1">
    <location>
        <position position="177"/>
    </location>
    <ligand>
        <name>Zn(2+)</name>
        <dbReference type="ChEBI" id="CHEBI:29105"/>
        <label>2</label>
    </ligand>
</feature>
<feature type="binding site" evidence="1">
    <location>
        <position position="199"/>
    </location>
    <ligand>
        <name>Zn(2+)</name>
        <dbReference type="ChEBI" id="CHEBI:29105"/>
        <label>1</label>
    </ligand>
</feature>
<feature type="binding site" evidence="1">
    <location>
        <position position="381"/>
    </location>
    <ligand>
        <name>Zn(2+)</name>
        <dbReference type="ChEBI" id="CHEBI:29105"/>
        <label>2</label>
    </ligand>
</feature>
<dbReference type="EC" id="3.4.11.4" evidence="1"/>
<dbReference type="EMBL" id="CP001407">
    <property type="protein sequence ID" value="ACO29109.1"/>
    <property type="molecule type" value="Genomic_DNA"/>
</dbReference>
<dbReference type="RefSeq" id="WP_000656979.1">
    <property type="nucleotide sequence ID" value="NZ_CP009318.1"/>
</dbReference>
<dbReference type="SMR" id="C1ENW4"/>
<dbReference type="MEROPS" id="M20.003"/>
<dbReference type="KEGG" id="bcx:BCA_3837"/>
<dbReference type="PATRIC" id="fig|572264.18.peg.3794"/>
<dbReference type="Proteomes" id="UP000002210">
    <property type="component" value="Chromosome"/>
</dbReference>
<dbReference type="GO" id="GO:0005829">
    <property type="term" value="C:cytosol"/>
    <property type="evidence" value="ECO:0007669"/>
    <property type="project" value="TreeGrafter"/>
</dbReference>
<dbReference type="GO" id="GO:0008237">
    <property type="term" value="F:metallopeptidase activity"/>
    <property type="evidence" value="ECO:0007669"/>
    <property type="project" value="UniProtKB-KW"/>
</dbReference>
<dbReference type="GO" id="GO:0045148">
    <property type="term" value="F:tripeptide aminopeptidase activity"/>
    <property type="evidence" value="ECO:0007669"/>
    <property type="project" value="UniProtKB-UniRule"/>
</dbReference>
<dbReference type="GO" id="GO:0008270">
    <property type="term" value="F:zinc ion binding"/>
    <property type="evidence" value="ECO:0007669"/>
    <property type="project" value="UniProtKB-UniRule"/>
</dbReference>
<dbReference type="GO" id="GO:0043171">
    <property type="term" value="P:peptide catabolic process"/>
    <property type="evidence" value="ECO:0007669"/>
    <property type="project" value="UniProtKB-UniRule"/>
</dbReference>
<dbReference type="GO" id="GO:0006508">
    <property type="term" value="P:proteolysis"/>
    <property type="evidence" value="ECO:0007669"/>
    <property type="project" value="UniProtKB-UniRule"/>
</dbReference>
<dbReference type="CDD" id="cd03892">
    <property type="entry name" value="M20_peptT"/>
    <property type="match status" value="1"/>
</dbReference>
<dbReference type="FunFam" id="3.30.70.360:FF:000002">
    <property type="entry name" value="Peptidase T"/>
    <property type="match status" value="1"/>
</dbReference>
<dbReference type="Gene3D" id="3.30.70.360">
    <property type="match status" value="1"/>
</dbReference>
<dbReference type="Gene3D" id="3.40.630.10">
    <property type="entry name" value="Zn peptidases"/>
    <property type="match status" value="1"/>
</dbReference>
<dbReference type="HAMAP" id="MF_00550">
    <property type="entry name" value="Aminopeptidase_M20"/>
    <property type="match status" value="1"/>
</dbReference>
<dbReference type="InterPro" id="IPR001261">
    <property type="entry name" value="ArgE/DapE_CS"/>
</dbReference>
<dbReference type="InterPro" id="IPR036264">
    <property type="entry name" value="Bact_exopeptidase_dim_dom"/>
</dbReference>
<dbReference type="InterPro" id="IPR002933">
    <property type="entry name" value="Peptidase_M20"/>
</dbReference>
<dbReference type="InterPro" id="IPR011650">
    <property type="entry name" value="Peptidase_M20_dimer"/>
</dbReference>
<dbReference type="InterPro" id="IPR010161">
    <property type="entry name" value="Peptidase_M20B"/>
</dbReference>
<dbReference type="NCBIfam" id="TIGR01882">
    <property type="entry name" value="peptidase-T"/>
    <property type="match status" value="1"/>
</dbReference>
<dbReference type="NCBIfam" id="NF003976">
    <property type="entry name" value="PRK05469.1"/>
    <property type="match status" value="1"/>
</dbReference>
<dbReference type="NCBIfam" id="NF009920">
    <property type="entry name" value="PRK13381.1"/>
    <property type="match status" value="1"/>
</dbReference>
<dbReference type="PANTHER" id="PTHR42994">
    <property type="entry name" value="PEPTIDASE T"/>
    <property type="match status" value="1"/>
</dbReference>
<dbReference type="PANTHER" id="PTHR42994:SF1">
    <property type="entry name" value="PEPTIDASE T"/>
    <property type="match status" value="1"/>
</dbReference>
<dbReference type="Pfam" id="PF07687">
    <property type="entry name" value="M20_dimer"/>
    <property type="match status" value="1"/>
</dbReference>
<dbReference type="Pfam" id="PF01546">
    <property type="entry name" value="Peptidase_M20"/>
    <property type="match status" value="1"/>
</dbReference>
<dbReference type="PIRSF" id="PIRSF037215">
    <property type="entry name" value="Peptidase_M20B"/>
    <property type="match status" value="1"/>
</dbReference>
<dbReference type="SUPFAM" id="SSF55031">
    <property type="entry name" value="Bacterial exopeptidase dimerisation domain"/>
    <property type="match status" value="1"/>
</dbReference>
<dbReference type="SUPFAM" id="SSF53187">
    <property type="entry name" value="Zn-dependent exopeptidases"/>
    <property type="match status" value="1"/>
</dbReference>
<dbReference type="PROSITE" id="PS00758">
    <property type="entry name" value="ARGE_DAPE_CPG2_1"/>
    <property type="match status" value="1"/>
</dbReference>
<dbReference type="PROSITE" id="PS00759">
    <property type="entry name" value="ARGE_DAPE_CPG2_2"/>
    <property type="match status" value="1"/>
</dbReference>
<accession>C1ENW4</accession>